<keyword id="KW-0077">Bacteriochlorophyll biosynthesis</keyword>
<keyword id="KW-0149">Chlorophyll biosynthesis</keyword>
<keyword id="KW-0408">Iron</keyword>
<keyword id="KW-0479">Metal-binding</keyword>
<keyword id="KW-0521">NADP</keyword>
<keyword id="KW-0560">Oxidoreductase</keyword>
<keyword id="KW-0602">Photosynthesis</keyword>
<keyword id="KW-1185">Reference proteome</keyword>
<evidence type="ECO:0000255" key="1">
    <source>
        <dbReference type="HAMAP-Rule" id="MF_01840"/>
    </source>
</evidence>
<gene>
    <name evidence="1" type="primary">acsF</name>
    <name type="ordered locus">RPB_3971</name>
</gene>
<feature type="chain" id="PRO_1000070550" description="Aerobic magnesium-protoporphyrin IX monomethyl ester [oxidative] cyclase">
    <location>
        <begin position="1"/>
        <end position="365"/>
    </location>
</feature>
<comment type="function">
    <text evidence="1">Catalyzes the formation of the isocyclic ring in chlorophyll biosynthesis. Mediates the cyclase reaction, which results in the formation of divinylprotochlorophyllide (Pchlide) characteristic of all chlorophylls from magnesium-protoporphyrin IX 13-monomethyl ester (MgPMME).</text>
</comment>
<comment type="catalytic activity">
    <reaction evidence="1">
        <text>Mg-protoporphyrin IX 13-monomethyl ester + 3 NADPH + 3 O2 + 2 H(+) = 3,8-divinyl protochlorophyllide a + 3 NADP(+) + 5 H2O</text>
        <dbReference type="Rhea" id="RHEA:33235"/>
        <dbReference type="ChEBI" id="CHEBI:15377"/>
        <dbReference type="ChEBI" id="CHEBI:15378"/>
        <dbReference type="ChEBI" id="CHEBI:15379"/>
        <dbReference type="ChEBI" id="CHEBI:57783"/>
        <dbReference type="ChEBI" id="CHEBI:58349"/>
        <dbReference type="ChEBI" id="CHEBI:58632"/>
        <dbReference type="ChEBI" id="CHEBI:60491"/>
        <dbReference type="EC" id="1.14.13.81"/>
    </reaction>
</comment>
<comment type="cofactor">
    <cofactor evidence="1">
        <name>Fe cation</name>
        <dbReference type="ChEBI" id="CHEBI:24875"/>
    </cofactor>
</comment>
<comment type="pathway">
    <text evidence="1">Porphyrin-containing compound metabolism; bacteriochlorophyll biosynthesis (light-independent).</text>
</comment>
<comment type="similarity">
    <text evidence="1">Belongs to the AcsF family.</text>
</comment>
<proteinExistence type="inferred from homology"/>
<organism>
    <name type="scientific">Rhodopseudomonas palustris (strain HaA2)</name>
    <dbReference type="NCBI Taxonomy" id="316058"/>
    <lineage>
        <taxon>Bacteria</taxon>
        <taxon>Pseudomonadati</taxon>
        <taxon>Pseudomonadota</taxon>
        <taxon>Alphaproteobacteria</taxon>
        <taxon>Hyphomicrobiales</taxon>
        <taxon>Nitrobacteraceae</taxon>
        <taxon>Rhodopseudomonas</taxon>
    </lineage>
</organism>
<reference key="1">
    <citation type="submission" date="2006-01" db="EMBL/GenBank/DDBJ databases">
        <title>Complete sequence of Rhodopseudomonas palustris HaA2.</title>
        <authorList>
            <consortium name="US DOE Joint Genome Institute"/>
            <person name="Copeland A."/>
            <person name="Lucas S."/>
            <person name="Lapidus A."/>
            <person name="Barry K."/>
            <person name="Detter J.C."/>
            <person name="Glavina T."/>
            <person name="Hammon N."/>
            <person name="Israni S."/>
            <person name="Pitluck S."/>
            <person name="Chain P."/>
            <person name="Malfatti S."/>
            <person name="Shin M."/>
            <person name="Vergez L."/>
            <person name="Schmutz J."/>
            <person name="Larimer F."/>
            <person name="Land M."/>
            <person name="Hauser L."/>
            <person name="Pelletier D.A."/>
            <person name="Kyrpides N."/>
            <person name="Anderson I."/>
            <person name="Oda Y."/>
            <person name="Harwood C.S."/>
            <person name="Richardson P."/>
        </authorList>
    </citation>
    <scope>NUCLEOTIDE SEQUENCE [LARGE SCALE GENOMIC DNA]</scope>
    <source>
        <strain>HaA2</strain>
    </source>
</reference>
<protein>
    <recommendedName>
        <fullName evidence="1">Aerobic magnesium-protoporphyrin IX monomethyl ester [oxidative] cyclase</fullName>
        <shortName evidence="1">Aerobic Mg-protoporphyrin IX monomethyl ester oxidative cyclase</shortName>
        <ecNumber evidence="1">1.14.13.81</ecNumber>
    </recommendedName>
</protein>
<dbReference type="EC" id="1.14.13.81" evidence="1"/>
<dbReference type="EMBL" id="CP000250">
    <property type="protein sequence ID" value="ABD08664.1"/>
    <property type="molecule type" value="Genomic_DNA"/>
</dbReference>
<dbReference type="RefSeq" id="WP_011442848.1">
    <property type="nucleotide sequence ID" value="NC_007778.1"/>
</dbReference>
<dbReference type="SMR" id="Q2ISZ6"/>
<dbReference type="STRING" id="316058.RPB_3971"/>
<dbReference type="KEGG" id="rpb:RPB_3971"/>
<dbReference type="eggNOG" id="COG1633">
    <property type="taxonomic scope" value="Bacteria"/>
</dbReference>
<dbReference type="HOGENOM" id="CLU_048037_0_0_5"/>
<dbReference type="OrthoDB" id="141643at2"/>
<dbReference type="UniPathway" id="UPA00671"/>
<dbReference type="Proteomes" id="UP000008809">
    <property type="component" value="Chromosome"/>
</dbReference>
<dbReference type="GO" id="GO:0005506">
    <property type="term" value="F:iron ion binding"/>
    <property type="evidence" value="ECO:0007669"/>
    <property type="project" value="UniProtKB-UniRule"/>
</dbReference>
<dbReference type="GO" id="GO:0048529">
    <property type="term" value="F:magnesium-protoporphyrin IX monomethyl ester (oxidative) cyclase activity"/>
    <property type="evidence" value="ECO:0007669"/>
    <property type="project" value="UniProtKB-UniRule"/>
</dbReference>
<dbReference type="GO" id="GO:0036070">
    <property type="term" value="P:light-independent bacteriochlorophyll biosynthetic process"/>
    <property type="evidence" value="ECO:0007669"/>
    <property type="project" value="UniProtKB-UniRule"/>
</dbReference>
<dbReference type="GO" id="GO:0015979">
    <property type="term" value="P:photosynthesis"/>
    <property type="evidence" value="ECO:0007669"/>
    <property type="project" value="UniProtKB-UniRule"/>
</dbReference>
<dbReference type="CDD" id="cd01047">
    <property type="entry name" value="ACSF"/>
    <property type="match status" value="1"/>
</dbReference>
<dbReference type="HAMAP" id="MF_01840">
    <property type="entry name" value="AcsF"/>
    <property type="match status" value="1"/>
</dbReference>
<dbReference type="InterPro" id="IPR008434">
    <property type="entry name" value="AcsF"/>
</dbReference>
<dbReference type="InterPro" id="IPR009078">
    <property type="entry name" value="Ferritin-like_SF"/>
</dbReference>
<dbReference type="InterPro" id="IPR003251">
    <property type="entry name" value="Rr_diiron-bd_dom"/>
</dbReference>
<dbReference type="NCBIfam" id="TIGR02029">
    <property type="entry name" value="AcsF"/>
    <property type="match status" value="1"/>
</dbReference>
<dbReference type="NCBIfam" id="NF010172">
    <property type="entry name" value="PRK13654.1"/>
    <property type="match status" value="1"/>
</dbReference>
<dbReference type="PANTHER" id="PTHR31053">
    <property type="entry name" value="MAGNESIUM-PROTOPORPHYRIN IX MONOMETHYL ESTER [OXIDATIVE] CYCLASE, CHLOROPLASTIC"/>
    <property type="match status" value="1"/>
</dbReference>
<dbReference type="PANTHER" id="PTHR31053:SF2">
    <property type="entry name" value="MAGNESIUM-PROTOPORPHYRIN IX MONOMETHYL ESTER [OXIDATIVE] CYCLASE, CHLOROPLASTIC"/>
    <property type="match status" value="1"/>
</dbReference>
<dbReference type="Pfam" id="PF02915">
    <property type="entry name" value="Rubrerythrin"/>
    <property type="match status" value="1"/>
</dbReference>
<dbReference type="SUPFAM" id="SSF47240">
    <property type="entry name" value="Ferritin-like"/>
    <property type="match status" value="1"/>
</dbReference>
<name>ACSF_RHOP2</name>
<accession>Q2ISZ6</accession>
<sequence>MIPMEGGAQSALRSRPAIKGSVESLNIAKEDTILTPRFYTTDYAAMDKLDVSLVRSEWNVMMNEMRADYNKSHFKKNDEFLESDLDKLPPALRAEFKDFLVSSLTAEFSGCVLYAEIKKRIKNPEIRELFGLLSRDEARHAGFINEILKDHGIGVDLSFLTKVKKYTYFRPKFIFYATYLSEKIGYARYITIYRQMERHPERRFHPIFKWFERWCNDEFRHGEAFALLMRADPSLLSGVNKLWIRFFLLAVFATMYVRDHMRPAFYEALGMDAAEYGMQVFRITTEISKQVFPVTINLDDPRFLAGLERLRVASEKLADCRSQGFVGKLKRPFYVASAALAFGRLFLLPAKRNELPRVIGLRPAW</sequence>